<evidence type="ECO:0000256" key="1">
    <source>
        <dbReference type="SAM" id="MobiDB-lite"/>
    </source>
</evidence>
<dbReference type="EMBL" id="AE005673">
    <property type="protein sequence ID" value="AAK22895.1"/>
    <property type="molecule type" value="Genomic_DNA"/>
</dbReference>
<dbReference type="EMBL" id="M73782">
    <property type="status" value="NOT_ANNOTATED_CDS"/>
    <property type="molecule type" value="Genomic_DNA"/>
</dbReference>
<dbReference type="PIR" id="B41320">
    <property type="entry name" value="B41320"/>
</dbReference>
<dbReference type="PIR" id="C87362">
    <property type="entry name" value="C87362"/>
</dbReference>
<dbReference type="RefSeq" id="NP_419727.1">
    <property type="nucleotide sequence ID" value="NC_002696.2"/>
</dbReference>
<dbReference type="RefSeq" id="WP_010918795.1">
    <property type="nucleotide sequence ID" value="NC_002696.2"/>
</dbReference>
<dbReference type="SMR" id="P33976"/>
<dbReference type="STRING" id="190650.CC_0911"/>
<dbReference type="EnsemblBacteria" id="AAK22895">
    <property type="protein sequence ID" value="AAK22895"/>
    <property type="gene ID" value="CC_0911"/>
</dbReference>
<dbReference type="KEGG" id="ccr:CC_0911"/>
<dbReference type="PATRIC" id="fig|190650.5.peg.924"/>
<dbReference type="eggNOG" id="COG3746">
    <property type="taxonomic scope" value="Bacteria"/>
</dbReference>
<dbReference type="HOGENOM" id="CLU_031025_4_0_5"/>
<dbReference type="BioCyc" id="CAULO:CC0911-MONOMER"/>
<dbReference type="Proteomes" id="UP000001816">
    <property type="component" value="Chromosome"/>
</dbReference>
<dbReference type="Gene3D" id="2.40.160.10">
    <property type="entry name" value="Porin"/>
    <property type="match status" value="1"/>
</dbReference>
<dbReference type="InterPro" id="IPR023614">
    <property type="entry name" value="Porin_dom_sf"/>
</dbReference>
<dbReference type="InterPro" id="IPR010870">
    <property type="entry name" value="Porin_O/P"/>
</dbReference>
<dbReference type="Pfam" id="PF07396">
    <property type="entry name" value="Porin_O_P"/>
    <property type="match status" value="1"/>
</dbReference>
<dbReference type="SUPFAM" id="SSF56935">
    <property type="entry name" value="Porins"/>
    <property type="match status" value="1"/>
</dbReference>
<organism>
    <name type="scientific">Caulobacter vibrioides (strain ATCC 19089 / CIP 103742 / CB 15)</name>
    <name type="common">Caulobacter crescentus</name>
    <dbReference type="NCBI Taxonomy" id="190650"/>
    <lineage>
        <taxon>Bacteria</taxon>
        <taxon>Pseudomonadati</taxon>
        <taxon>Pseudomonadota</taxon>
        <taxon>Alphaproteobacteria</taxon>
        <taxon>Caulobacterales</taxon>
        <taxon>Caulobacteraceae</taxon>
        <taxon>Caulobacter</taxon>
    </lineage>
</organism>
<reference key="1">
    <citation type="journal article" date="2001" name="Proc. Natl. Acad. Sci. U.S.A.">
        <title>Complete genome sequence of Caulobacter crescentus.</title>
        <authorList>
            <person name="Nierman W.C."/>
            <person name="Feldblyum T.V."/>
            <person name="Laub M.T."/>
            <person name="Paulsen I.T."/>
            <person name="Nelson K.E."/>
            <person name="Eisen J.A."/>
            <person name="Heidelberg J.F."/>
            <person name="Alley M.R.K."/>
            <person name="Ohta N."/>
            <person name="Maddock J.R."/>
            <person name="Potocka I."/>
            <person name="Nelson W.C."/>
            <person name="Newton A."/>
            <person name="Stephens C."/>
            <person name="Phadke N.D."/>
            <person name="Ely B."/>
            <person name="DeBoy R.T."/>
            <person name="Dodson R.J."/>
            <person name="Durkin A.S."/>
            <person name="Gwinn M.L."/>
            <person name="Haft D.H."/>
            <person name="Kolonay J.F."/>
            <person name="Smit J."/>
            <person name="Craven M.B."/>
            <person name="Khouri H.M."/>
            <person name="Shetty J."/>
            <person name="Berry K.J."/>
            <person name="Utterback T.R."/>
            <person name="Tran K."/>
            <person name="Wolf A.M."/>
            <person name="Vamathevan J.J."/>
            <person name="Ermolaeva M.D."/>
            <person name="White O."/>
            <person name="Salzberg S.L."/>
            <person name="Venter J.C."/>
            <person name="Shapiro L."/>
            <person name="Fraser C.M."/>
        </authorList>
    </citation>
    <scope>NUCLEOTIDE SEQUENCE [LARGE SCALE GENOMIC DNA]</scope>
    <source>
        <strain>ATCC 19089 / CIP 103742 / CB 15</strain>
    </source>
</reference>
<reference key="2">
    <citation type="journal article" date="1991" name="J. Bacteriol.">
        <title>The cell cycle-regulated flagellar gene flbF of Caulobacter crescentus is homologous to a virulence locus (lcrD) of Yersinia pestis.</title>
        <authorList>
            <person name="Ramakrishnan G."/>
            <person name="Zhao J.L."/>
            <person name="Newton A."/>
        </authorList>
    </citation>
    <scope>NUCLEOTIDE SEQUENCE [GENOMIC DNA] OF 1-295</scope>
    <source>
        <strain>ATCC 19089 / CIP 103742 / CB 15</strain>
    </source>
</reference>
<proteinExistence type="predicted"/>
<sequence length="493" mass="53105">MTIEGGPKRSQKVVFLQPVLTSLVALLAAGACLSPTVALAQDQLSPDEVAALRSEIATLRAQLQKMEQRLDAVTSAPQTTAPAAPPAIQPPAPVATTVAKASPPPAKPASAPTEITWKGSPQFTSGDRSFKAKGRIQIDVGQVDAPKGLVDRGLGYGAEMRRIRLGGEGDLGAGVGYELELELSDNAVKLVDTFVTYRTGPWLVTVGNHNPFQSLDELTGDTVGAFMERAAFTDAFNFERRLGVSAQYEKGPWVLQGGLFADDIDALSNSSDGPEGGDENNSYGLDGRAVYAPKLGQTQLHLGASAHWRTLKRVTDAGTRYRQRPYVHASNSRLIGTAVLPVEEEVHYGLEAAFVSGRWHGAAETYWQAAELTTGTRPTFFGGYAELGYFLTGDTRGYRGGQFSRTRPSKPLGGGGVGALQLNVRYDYLDLNDRGVVGGKQDAWLAALIWQPLDHLRFHLNYGLLDYQGATPLRNGDRDYRVNVAGARMELDF</sequence>
<keyword id="KW-1185">Reference proteome</keyword>
<accession>P33976</accession>
<protein>
    <recommendedName>
        <fullName>Uncharacterized protein CC_0911</fullName>
    </recommendedName>
</protein>
<gene>
    <name type="ordered locus">CC_0911</name>
</gene>
<name>Y911_CAUVC</name>
<feature type="chain" id="PRO_0000197429" description="Uncharacterized protein CC_0911">
    <location>
        <begin position="1"/>
        <end position="493"/>
    </location>
</feature>
<feature type="region of interest" description="Disordered" evidence="1">
    <location>
        <begin position="96"/>
        <end position="124"/>
    </location>
</feature>